<sequence length="550" mass="57978">MSAKDVKFGGDARDRMLRGVDILANAVKVTLGPKGRNVLIEKSFGAPRITKDGVTVAKEIELDDKFENMGAQMLREVASKTNDLAGDGTTTATVLAQAIVREGAKSVAAGMNPMDLRRGIEIAVQAVVKDIQKRARPVASSAEIAQVGTISANGDAPIGKMIAQAMQKVGNEGVITVEENKSLETEVDIVEGMKFDRGYLSPYFVTNAEKMTVELDDVYILLHEKKVSGLQSMLPVLEAVVQSGKPLLIIAEDVEGEALATLVVNRLRGGLKVSAVKAPGFGDRRKAMLEDIAILTGGQLISEEIGIKLESVTLKMLGRAKKVVIDKENTTIVGGAGKKPDIEARVQQIKAQIEETSSDYDREKLQERLAKLAGGVAVIRVGGATEVEVKEKKDRVEDALNATRAAVQEGIVPGGGVALLRAKKAVGRIHNDNADVQAGINIVLKALEAPIRQIAENAGVEGSIVVGKILENKSETFGFDAQTEDYVDMLAKGIVDPAKVVRTALQDASSVAALLVTTEAMVAELPKEAAPAMPGGGGMGGMGGMGGMGF</sequence>
<accession>Q2IZ16</accession>
<name>CH601_RHOP2</name>
<feature type="chain" id="PRO_0000256972" description="Chaperonin GroEL 1">
    <location>
        <begin position="1"/>
        <end position="550"/>
    </location>
</feature>
<feature type="binding site" evidence="1">
    <location>
        <begin position="30"/>
        <end position="33"/>
    </location>
    <ligand>
        <name>ATP</name>
        <dbReference type="ChEBI" id="CHEBI:30616"/>
    </ligand>
</feature>
<feature type="binding site" evidence="1">
    <location>
        <position position="51"/>
    </location>
    <ligand>
        <name>ATP</name>
        <dbReference type="ChEBI" id="CHEBI:30616"/>
    </ligand>
</feature>
<feature type="binding site" evidence="1">
    <location>
        <begin position="87"/>
        <end position="91"/>
    </location>
    <ligand>
        <name>ATP</name>
        <dbReference type="ChEBI" id="CHEBI:30616"/>
    </ligand>
</feature>
<feature type="binding site" evidence="1">
    <location>
        <position position="415"/>
    </location>
    <ligand>
        <name>ATP</name>
        <dbReference type="ChEBI" id="CHEBI:30616"/>
    </ligand>
</feature>
<feature type="binding site" evidence="1">
    <location>
        <position position="496"/>
    </location>
    <ligand>
        <name>ATP</name>
        <dbReference type="ChEBI" id="CHEBI:30616"/>
    </ligand>
</feature>
<protein>
    <recommendedName>
        <fullName evidence="1">Chaperonin GroEL 1</fullName>
        <ecNumber evidence="1">5.6.1.7</ecNumber>
    </recommendedName>
    <alternativeName>
        <fullName evidence="1">60 kDa chaperonin 1</fullName>
    </alternativeName>
    <alternativeName>
        <fullName evidence="1">Chaperonin-60 1</fullName>
        <shortName evidence="1">Cpn60 1</shortName>
    </alternativeName>
</protein>
<comment type="function">
    <text evidence="1">Together with its co-chaperonin GroES, plays an essential role in assisting protein folding. The GroEL-GroES system forms a nano-cage that allows encapsulation of the non-native substrate proteins and provides a physical environment optimized to promote and accelerate protein folding.</text>
</comment>
<comment type="catalytic activity">
    <reaction evidence="1">
        <text>ATP + H2O + a folded polypeptide = ADP + phosphate + an unfolded polypeptide.</text>
        <dbReference type="EC" id="5.6.1.7"/>
    </reaction>
</comment>
<comment type="subunit">
    <text evidence="1">Forms a cylinder of 14 subunits composed of two heptameric rings stacked back-to-back. Interacts with the co-chaperonin GroES.</text>
</comment>
<comment type="subcellular location">
    <subcellularLocation>
        <location evidence="1">Cytoplasm</location>
    </subcellularLocation>
</comment>
<comment type="similarity">
    <text evidence="1">Belongs to the chaperonin (HSP60) family.</text>
</comment>
<proteinExistence type="inferred from homology"/>
<evidence type="ECO:0000255" key="1">
    <source>
        <dbReference type="HAMAP-Rule" id="MF_00600"/>
    </source>
</evidence>
<gene>
    <name evidence="1" type="primary">groEL1</name>
    <name evidence="1" type="synonym">groL1</name>
    <name type="ordered locus">RPB_1836</name>
</gene>
<reference key="1">
    <citation type="submission" date="2006-01" db="EMBL/GenBank/DDBJ databases">
        <title>Complete sequence of Rhodopseudomonas palustris HaA2.</title>
        <authorList>
            <consortium name="US DOE Joint Genome Institute"/>
            <person name="Copeland A."/>
            <person name="Lucas S."/>
            <person name="Lapidus A."/>
            <person name="Barry K."/>
            <person name="Detter J.C."/>
            <person name="Glavina T."/>
            <person name="Hammon N."/>
            <person name="Israni S."/>
            <person name="Pitluck S."/>
            <person name="Chain P."/>
            <person name="Malfatti S."/>
            <person name="Shin M."/>
            <person name="Vergez L."/>
            <person name="Schmutz J."/>
            <person name="Larimer F."/>
            <person name="Land M."/>
            <person name="Hauser L."/>
            <person name="Pelletier D.A."/>
            <person name="Kyrpides N."/>
            <person name="Anderson I."/>
            <person name="Oda Y."/>
            <person name="Harwood C.S."/>
            <person name="Richardson P."/>
        </authorList>
    </citation>
    <scope>NUCLEOTIDE SEQUENCE [LARGE SCALE GENOMIC DNA]</scope>
    <source>
        <strain>HaA2</strain>
    </source>
</reference>
<keyword id="KW-0067">ATP-binding</keyword>
<keyword id="KW-0143">Chaperone</keyword>
<keyword id="KW-0963">Cytoplasm</keyword>
<keyword id="KW-0413">Isomerase</keyword>
<keyword id="KW-0547">Nucleotide-binding</keyword>
<keyword id="KW-1185">Reference proteome</keyword>
<organism>
    <name type="scientific">Rhodopseudomonas palustris (strain HaA2)</name>
    <dbReference type="NCBI Taxonomy" id="316058"/>
    <lineage>
        <taxon>Bacteria</taxon>
        <taxon>Pseudomonadati</taxon>
        <taxon>Pseudomonadota</taxon>
        <taxon>Alphaproteobacteria</taxon>
        <taxon>Hyphomicrobiales</taxon>
        <taxon>Nitrobacteraceae</taxon>
        <taxon>Rhodopseudomonas</taxon>
    </lineage>
</organism>
<dbReference type="EC" id="5.6.1.7" evidence="1"/>
<dbReference type="EMBL" id="CP000250">
    <property type="protein sequence ID" value="ABD06544.1"/>
    <property type="molecule type" value="Genomic_DNA"/>
</dbReference>
<dbReference type="RefSeq" id="WP_011440732.1">
    <property type="nucleotide sequence ID" value="NC_007778.1"/>
</dbReference>
<dbReference type="SMR" id="Q2IZ16"/>
<dbReference type="STRING" id="316058.RPB_1836"/>
<dbReference type="KEGG" id="rpb:RPB_1836"/>
<dbReference type="eggNOG" id="COG0459">
    <property type="taxonomic scope" value="Bacteria"/>
</dbReference>
<dbReference type="HOGENOM" id="CLU_016503_3_0_5"/>
<dbReference type="OrthoDB" id="9766614at2"/>
<dbReference type="Proteomes" id="UP000008809">
    <property type="component" value="Chromosome"/>
</dbReference>
<dbReference type="GO" id="GO:0005737">
    <property type="term" value="C:cytoplasm"/>
    <property type="evidence" value="ECO:0007669"/>
    <property type="project" value="UniProtKB-SubCell"/>
</dbReference>
<dbReference type="GO" id="GO:0005524">
    <property type="term" value="F:ATP binding"/>
    <property type="evidence" value="ECO:0007669"/>
    <property type="project" value="UniProtKB-UniRule"/>
</dbReference>
<dbReference type="GO" id="GO:0140662">
    <property type="term" value="F:ATP-dependent protein folding chaperone"/>
    <property type="evidence" value="ECO:0007669"/>
    <property type="project" value="InterPro"/>
</dbReference>
<dbReference type="GO" id="GO:0016853">
    <property type="term" value="F:isomerase activity"/>
    <property type="evidence" value="ECO:0007669"/>
    <property type="project" value="UniProtKB-KW"/>
</dbReference>
<dbReference type="GO" id="GO:0051082">
    <property type="term" value="F:unfolded protein binding"/>
    <property type="evidence" value="ECO:0007669"/>
    <property type="project" value="UniProtKB-UniRule"/>
</dbReference>
<dbReference type="GO" id="GO:0042026">
    <property type="term" value="P:protein refolding"/>
    <property type="evidence" value="ECO:0007669"/>
    <property type="project" value="UniProtKB-UniRule"/>
</dbReference>
<dbReference type="CDD" id="cd03344">
    <property type="entry name" value="GroEL"/>
    <property type="match status" value="1"/>
</dbReference>
<dbReference type="FunFam" id="1.10.560.10:FF:000001">
    <property type="entry name" value="60 kDa chaperonin"/>
    <property type="match status" value="1"/>
</dbReference>
<dbReference type="FunFam" id="3.50.7.10:FF:000001">
    <property type="entry name" value="60 kDa chaperonin"/>
    <property type="match status" value="1"/>
</dbReference>
<dbReference type="Gene3D" id="3.50.7.10">
    <property type="entry name" value="GroEL"/>
    <property type="match status" value="1"/>
</dbReference>
<dbReference type="Gene3D" id="1.10.560.10">
    <property type="entry name" value="GroEL-like equatorial domain"/>
    <property type="match status" value="1"/>
</dbReference>
<dbReference type="Gene3D" id="3.30.260.10">
    <property type="entry name" value="TCP-1-like chaperonin intermediate domain"/>
    <property type="match status" value="1"/>
</dbReference>
<dbReference type="HAMAP" id="MF_00600">
    <property type="entry name" value="CH60"/>
    <property type="match status" value="1"/>
</dbReference>
<dbReference type="InterPro" id="IPR018370">
    <property type="entry name" value="Chaperonin_Cpn60_CS"/>
</dbReference>
<dbReference type="InterPro" id="IPR001844">
    <property type="entry name" value="Cpn60/GroEL"/>
</dbReference>
<dbReference type="InterPro" id="IPR002423">
    <property type="entry name" value="Cpn60/GroEL/TCP-1"/>
</dbReference>
<dbReference type="InterPro" id="IPR027409">
    <property type="entry name" value="GroEL-like_apical_dom_sf"/>
</dbReference>
<dbReference type="InterPro" id="IPR027413">
    <property type="entry name" value="GROEL-like_equatorial_sf"/>
</dbReference>
<dbReference type="InterPro" id="IPR027410">
    <property type="entry name" value="TCP-1-like_intermed_sf"/>
</dbReference>
<dbReference type="NCBIfam" id="TIGR02348">
    <property type="entry name" value="GroEL"/>
    <property type="match status" value="1"/>
</dbReference>
<dbReference type="NCBIfam" id="NF000592">
    <property type="entry name" value="PRK00013.1"/>
    <property type="match status" value="1"/>
</dbReference>
<dbReference type="NCBIfam" id="NF009487">
    <property type="entry name" value="PRK12849.1"/>
    <property type="match status" value="1"/>
</dbReference>
<dbReference type="NCBIfam" id="NF009488">
    <property type="entry name" value="PRK12850.1"/>
    <property type="match status" value="1"/>
</dbReference>
<dbReference type="NCBIfam" id="NF009489">
    <property type="entry name" value="PRK12851.1"/>
    <property type="match status" value="1"/>
</dbReference>
<dbReference type="PANTHER" id="PTHR45633">
    <property type="entry name" value="60 KDA HEAT SHOCK PROTEIN, MITOCHONDRIAL"/>
    <property type="match status" value="1"/>
</dbReference>
<dbReference type="Pfam" id="PF00118">
    <property type="entry name" value="Cpn60_TCP1"/>
    <property type="match status" value="1"/>
</dbReference>
<dbReference type="PRINTS" id="PR00298">
    <property type="entry name" value="CHAPERONIN60"/>
</dbReference>
<dbReference type="SUPFAM" id="SSF52029">
    <property type="entry name" value="GroEL apical domain-like"/>
    <property type="match status" value="1"/>
</dbReference>
<dbReference type="SUPFAM" id="SSF48592">
    <property type="entry name" value="GroEL equatorial domain-like"/>
    <property type="match status" value="1"/>
</dbReference>
<dbReference type="SUPFAM" id="SSF54849">
    <property type="entry name" value="GroEL-intermediate domain like"/>
    <property type="match status" value="1"/>
</dbReference>
<dbReference type="PROSITE" id="PS00296">
    <property type="entry name" value="CHAPERONINS_CPN60"/>
    <property type="match status" value="1"/>
</dbReference>